<comment type="function">
    <text>Fatty acid synthetase catalyzes the formation of long-chain fatty acids from acetyl-CoA, malonyl-CoA and NADPH. This multifunctional protein has 7 catalytic activities as an acyl carrier protein.</text>
</comment>
<comment type="catalytic activity">
    <reaction>
        <text>acetyl-CoA + n malonyl-CoA + 2n NADPH + 2n H(+) = a long-chain fatty acid + (n+1) CoA + n CO2 + 2n NADP(+).</text>
        <dbReference type="EC" id="2.3.1.85"/>
    </reaction>
</comment>
<comment type="subunit">
    <text>Homodimer which monomers are arranged in a head to tail fashion.</text>
</comment>
<comment type="induction">
    <text>By triiodothyronine.</text>
</comment>
<organism>
    <name type="scientific">Anser anser anser</name>
    <name type="common">Western greylag goose</name>
    <dbReference type="NCBI Taxonomy" id="8844"/>
    <lineage>
        <taxon>Eukaryota</taxon>
        <taxon>Metazoa</taxon>
        <taxon>Chordata</taxon>
        <taxon>Craniata</taxon>
        <taxon>Vertebrata</taxon>
        <taxon>Euteleostomi</taxon>
        <taxon>Archelosauria</taxon>
        <taxon>Archosauria</taxon>
        <taxon>Dinosauria</taxon>
        <taxon>Saurischia</taxon>
        <taxon>Theropoda</taxon>
        <taxon>Coelurosauria</taxon>
        <taxon>Aves</taxon>
        <taxon>Neognathae</taxon>
        <taxon>Galloanserae</taxon>
        <taxon>Anseriformes</taxon>
        <taxon>Anatidae</taxon>
        <taxon>Anserinae</taxon>
        <taxon>Anser</taxon>
    </lineage>
</organism>
<gene>
    <name type="primary">FASN</name>
    <name type="synonym">FAS</name>
</gene>
<dbReference type="EC" id="2.3.1.85"/>
<dbReference type="EMBL" id="M60622">
    <property type="protein sequence ID" value="AAA49316.1"/>
    <property type="molecule type" value="mRNA"/>
</dbReference>
<dbReference type="PIR" id="A39042">
    <property type="entry name" value="A39042"/>
</dbReference>
<dbReference type="SMR" id="P36189"/>
<dbReference type="GO" id="GO:0005737">
    <property type="term" value="C:cytoplasm"/>
    <property type="evidence" value="ECO:0007669"/>
    <property type="project" value="TreeGrafter"/>
</dbReference>
<dbReference type="GO" id="GO:0004315">
    <property type="term" value="F:3-oxoacyl-[acyl-carrier-protein] synthase activity"/>
    <property type="evidence" value="ECO:0007669"/>
    <property type="project" value="InterPro"/>
</dbReference>
<dbReference type="GO" id="GO:0004312">
    <property type="term" value="F:fatty acid synthase activity"/>
    <property type="evidence" value="ECO:0007669"/>
    <property type="project" value="UniProtKB-EC"/>
</dbReference>
<dbReference type="GO" id="GO:0016787">
    <property type="term" value="F:hydrolase activity"/>
    <property type="evidence" value="ECO:0007669"/>
    <property type="project" value="UniProtKB-KW"/>
</dbReference>
<dbReference type="GO" id="GO:0016874">
    <property type="term" value="F:ligase activity"/>
    <property type="evidence" value="ECO:0007669"/>
    <property type="project" value="UniProtKB-KW"/>
</dbReference>
<dbReference type="GO" id="GO:0016491">
    <property type="term" value="F:oxidoreductase activity"/>
    <property type="evidence" value="ECO:0007669"/>
    <property type="project" value="UniProtKB-KW"/>
</dbReference>
<dbReference type="GO" id="GO:0006633">
    <property type="term" value="P:fatty acid biosynthetic process"/>
    <property type="evidence" value="ECO:0007669"/>
    <property type="project" value="UniProtKB-KW"/>
</dbReference>
<dbReference type="CDD" id="cd00833">
    <property type="entry name" value="PKS"/>
    <property type="match status" value="1"/>
</dbReference>
<dbReference type="Gene3D" id="3.40.47.10">
    <property type="match status" value="1"/>
</dbReference>
<dbReference type="InterPro" id="IPR018201">
    <property type="entry name" value="Ketoacyl_synth_AS"/>
</dbReference>
<dbReference type="InterPro" id="IPR014031">
    <property type="entry name" value="Ketoacyl_synth_C"/>
</dbReference>
<dbReference type="InterPro" id="IPR014030">
    <property type="entry name" value="Ketoacyl_synth_N"/>
</dbReference>
<dbReference type="InterPro" id="IPR020841">
    <property type="entry name" value="PKS_Beta-ketoAc_synthase_dom"/>
</dbReference>
<dbReference type="InterPro" id="IPR050091">
    <property type="entry name" value="PKS_NRPS_Biosynth_Enz"/>
</dbReference>
<dbReference type="InterPro" id="IPR016039">
    <property type="entry name" value="Thiolase-like"/>
</dbReference>
<dbReference type="PANTHER" id="PTHR43775">
    <property type="entry name" value="FATTY ACID SYNTHASE"/>
    <property type="match status" value="1"/>
</dbReference>
<dbReference type="PANTHER" id="PTHR43775:SF7">
    <property type="entry name" value="FATTY ACID SYNTHASE"/>
    <property type="match status" value="1"/>
</dbReference>
<dbReference type="Pfam" id="PF00109">
    <property type="entry name" value="ketoacyl-synt"/>
    <property type="match status" value="1"/>
</dbReference>
<dbReference type="Pfam" id="PF02801">
    <property type="entry name" value="Ketoacyl-synt_C"/>
    <property type="match status" value="1"/>
</dbReference>
<dbReference type="SMART" id="SM00825">
    <property type="entry name" value="PKS_KS"/>
    <property type="match status" value="1"/>
</dbReference>
<dbReference type="SUPFAM" id="SSF53901">
    <property type="entry name" value="Thiolase-like"/>
    <property type="match status" value="1"/>
</dbReference>
<dbReference type="PROSITE" id="PS00606">
    <property type="entry name" value="KS3_1"/>
    <property type="match status" value="1"/>
</dbReference>
<dbReference type="PROSITE" id="PS52004">
    <property type="entry name" value="KS3_2"/>
    <property type="match status" value="1"/>
</dbReference>
<name>FAS_ANSAN</name>
<proteinExistence type="evidence at protein level"/>
<reference key="1">
    <citation type="journal article" date="1991" name="J. Biol. Chem.">
        <title>Isolation and partial characterization of the gene for goose fatty acid synthase.</title>
        <authorList>
            <person name="Kameda K."/>
            <person name="Goodridge A.G."/>
        </authorList>
    </citation>
    <scope>NUCLEOTIDE SEQUENCE [MRNA]</scope>
    <source>
        <tissue>Liver</tissue>
    </source>
</reference>
<reference key="2">
    <citation type="journal article" date="1984" name="Arch. Biochem. Biophys.">
        <title>Specific modification of the condensation domain of fatty acid synthase and the determination of the primary structure of the modified active site peptides.</title>
        <authorList>
            <person name="Pouloe A.J."/>
            <person name="Bonsall R.F."/>
            <person name="Kolattukudy P.E."/>
        </authorList>
    </citation>
    <scope>PROTEIN SEQUENCE OF 152-173</scope>
</reference>
<accession>P36189</accession>
<keyword id="KW-0903">Direct protein sequencing</keyword>
<keyword id="KW-0275">Fatty acid biosynthesis</keyword>
<keyword id="KW-0276">Fatty acid metabolism</keyword>
<keyword id="KW-0378">Hydrolase</keyword>
<keyword id="KW-0436">Ligase</keyword>
<keyword id="KW-0444">Lipid biosynthesis</keyword>
<keyword id="KW-0443">Lipid metabolism</keyword>
<keyword id="KW-0511">Multifunctional enzyme</keyword>
<keyword id="KW-0520">NAD</keyword>
<keyword id="KW-0521">NADP</keyword>
<keyword id="KW-0560">Oxidoreductase</keyword>
<keyword id="KW-0596">Phosphopantetheine</keyword>
<keyword id="KW-0808">Transferase</keyword>
<feature type="chain" id="PRO_0000180272" description="Fatty acid synthase">
    <location>
        <begin position="1"/>
        <end position="352" status="greater than"/>
    </location>
</feature>
<feature type="domain" description="Ketosynthase family 3 (KS3)" evidence="1">
    <location>
        <begin position="1"/>
        <end position="352"/>
    </location>
</feature>
<feature type="active site" description="For beta-ketoacyl synthase activity" evidence="1">
    <location>
        <position position="161"/>
    </location>
</feature>
<feature type="active site" description="For beta-ketoacyl synthase activity" evidence="1">
    <location>
        <position position="293"/>
    </location>
</feature>
<feature type="active site" description="For beta-ketoacyl synthase activity" evidence="1">
    <location>
        <position position="331"/>
    </location>
</feature>
<feature type="non-terminal residue">
    <location>
        <position position="352"/>
    </location>
</feature>
<sequence>MEDVVIAGIAGKLPESENLQEFWEKLLNGVDMVTEDDRRWKPGMYGLPKRNGKLKDISKFDASFFGVHPKQAHTMDPQLRLLLEVSYEAILDGGINPATLRGTDTGVWVGASGSEAGEAFSQDPEQLLGYSMIGCQRAMFANRISYFYDFKGPSLSIDTACSSSLMALENAYKAIRNGRCSAAVVGGVNLLLKPNTSVQFMKLGMLSPDGACKVFDASGDGYCRSEAVVVVLLTKKSMAKRIYATIVNAGSNTDGFKEQGVTFPSGDMQRQLVSSLHRECGIKPGDIEYVETHGTGTKVGDPQEVNGLADLFCQCEREPLLIGSTKSNMGHPEPASGLAALAKVVLSLEHGL</sequence>
<evidence type="ECO:0000255" key="1">
    <source>
        <dbReference type="PROSITE-ProRule" id="PRU01348"/>
    </source>
</evidence>
<protein>
    <recommendedName>
        <fullName>Fatty acid synthase</fullName>
        <ecNumber>2.3.1.85</ecNumber>
    </recommendedName>
</protein>